<proteinExistence type="inferred from homology"/>
<dbReference type="EC" id="4.1.1.112" evidence="1"/>
<dbReference type="EMBL" id="CP000250">
    <property type="protein sequence ID" value="ABD07073.1"/>
    <property type="molecule type" value="Genomic_DNA"/>
</dbReference>
<dbReference type="RefSeq" id="WP_011441258.1">
    <property type="nucleotide sequence ID" value="NC_007778.1"/>
</dbReference>
<dbReference type="SMR" id="Q2IXI7"/>
<dbReference type="STRING" id="316058.RPB_2368"/>
<dbReference type="KEGG" id="rpb:RPB_2368"/>
<dbReference type="eggNOG" id="COG2513">
    <property type="taxonomic scope" value="Bacteria"/>
</dbReference>
<dbReference type="HOGENOM" id="CLU_027389_3_2_5"/>
<dbReference type="OrthoDB" id="9771433at2"/>
<dbReference type="Proteomes" id="UP000008809">
    <property type="component" value="Chromosome"/>
</dbReference>
<dbReference type="GO" id="GO:0000287">
    <property type="term" value="F:magnesium ion binding"/>
    <property type="evidence" value="ECO:0007669"/>
    <property type="project" value="UniProtKB-UniRule"/>
</dbReference>
<dbReference type="GO" id="GO:0046421">
    <property type="term" value="F:methylisocitrate lyase activity"/>
    <property type="evidence" value="ECO:0007669"/>
    <property type="project" value="TreeGrafter"/>
</dbReference>
<dbReference type="GO" id="GO:0008948">
    <property type="term" value="F:oxaloacetate decarboxylase activity"/>
    <property type="evidence" value="ECO:0007669"/>
    <property type="project" value="UniProtKB-UniRule"/>
</dbReference>
<dbReference type="GO" id="GO:0006107">
    <property type="term" value="P:oxaloacetate metabolic process"/>
    <property type="evidence" value="ECO:0007669"/>
    <property type="project" value="UniProtKB-UniRule"/>
</dbReference>
<dbReference type="GO" id="GO:0019629">
    <property type="term" value="P:propionate catabolic process, 2-methylcitrate cycle"/>
    <property type="evidence" value="ECO:0007669"/>
    <property type="project" value="TreeGrafter"/>
</dbReference>
<dbReference type="GO" id="GO:0042866">
    <property type="term" value="P:pyruvate biosynthetic process"/>
    <property type="evidence" value="ECO:0007669"/>
    <property type="project" value="UniProtKB-UniRule"/>
</dbReference>
<dbReference type="CDD" id="cd00377">
    <property type="entry name" value="ICL_PEPM"/>
    <property type="match status" value="1"/>
</dbReference>
<dbReference type="Gene3D" id="3.20.20.60">
    <property type="entry name" value="Phosphoenolpyruvate-binding domains"/>
    <property type="match status" value="1"/>
</dbReference>
<dbReference type="HAMAP" id="MF_01299">
    <property type="entry name" value="OadC"/>
    <property type="match status" value="1"/>
</dbReference>
<dbReference type="InterPro" id="IPR039556">
    <property type="entry name" value="ICL/PEPM"/>
</dbReference>
<dbReference type="InterPro" id="IPR023687">
    <property type="entry name" value="Oxaloacetate_deCOase_bac"/>
</dbReference>
<dbReference type="InterPro" id="IPR015813">
    <property type="entry name" value="Pyrv/PenolPyrv_kinase-like_dom"/>
</dbReference>
<dbReference type="InterPro" id="IPR040442">
    <property type="entry name" value="Pyrv_kinase-like_dom_sf"/>
</dbReference>
<dbReference type="PANTHER" id="PTHR42905:SF3">
    <property type="entry name" value="OXALOACETATE DECARBOXYLASE"/>
    <property type="match status" value="1"/>
</dbReference>
<dbReference type="PANTHER" id="PTHR42905">
    <property type="entry name" value="PHOSPHOENOLPYRUVATE CARBOXYLASE"/>
    <property type="match status" value="1"/>
</dbReference>
<dbReference type="Pfam" id="PF13714">
    <property type="entry name" value="PEP_mutase"/>
    <property type="match status" value="1"/>
</dbReference>
<dbReference type="SUPFAM" id="SSF51621">
    <property type="entry name" value="Phosphoenolpyruvate/pyruvate domain"/>
    <property type="match status" value="1"/>
</dbReference>
<reference key="1">
    <citation type="submission" date="2006-01" db="EMBL/GenBank/DDBJ databases">
        <title>Complete sequence of Rhodopseudomonas palustris HaA2.</title>
        <authorList>
            <consortium name="US DOE Joint Genome Institute"/>
            <person name="Copeland A."/>
            <person name="Lucas S."/>
            <person name="Lapidus A."/>
            <person name="Barry K."/>
            <person name="Detter J.C."/>
            <person name="Glavina T."/>
            <person name="Hammon N."/>
            <person name="Israni S."/>
            <person name="Pitluck S."/>
            <person name="Chain P."/>
            <person name="Malfatti S."/>
            <person name="Shin M."/>
            <person name="Vergez L."/>
            <person name="Schmutz J."/>
            <person name="Larimer F."/>
            <person name="Land M."/>
            <person name="Hauser L."/>
            <person name="Pelletier D.A."/>
            <person name="Kyrpides N."/>
            <person name="Anderson I."/>
            <person name="Oda Y."/>
            <person name="Harwood C.S."/>
            <person name="Richardson P."/>
        </authorList>
    </citation>
    <scope>NUCLEOTIDE SEQUENCE [LARGE SCALE GENOMIC DNA]</scope>
    <source>
        <strain>HaA2</strain>
    </source>
</reference>
<accession>Q2IXI7</accession>
<protein>
    <recommendedName>
        <fullName evidence="1">Oxaloacetate decarboxylase</fullName>
        <ecNumber evidence="1">4.1.1.112</ecNumber>
    </recommendedName>
</protein>
<name>OADC_RHOP2</name>
<organism>
    <name type="scientific">Rhodopseudomonas palustris (strain HaA2)</name>
    <dbReference type="NCBI Taxonomy" id="316058"/>
    <lineage>
        <taxon>Bacteria</taxon>
        <taxon>Pseudomonadati</taxon>
        <taxon>Pseudomonadota</taxon>
        <taxon>Alphaproteobacteria</taxon>
        <taxon>Hyphomicrobiales</taxon>
        <taxon>Nitrobacteraceae</taxon>
        <taxon>Rhodopseudomonas</taxon>
    </lineage>
</organism>
<comment type="function">
    <text evidence="1">Catalyzes the decarboxylation of oxaloacetate into pyruvate. Seems to play a role in maintaining cellular concentrations of bicarbonate and pyruvate.</text>
</comment>
<comment type="catalytic activity">
    <reaction evidence="1">
        <text>oxaloacetate + H(+) = pyruvate + CO2</text>
        <dbReference type="Rhea" id="RHEA:15641"/>
        <dbReference type="ChEBI" id="CHEBI:15361"/>
        <dbReference type="ChEBI" id="CHEBI:15378"/>
        <dbReference type="ChEBI" id="CHEBI:16452"/>
        <dbReference type="ChEBI" id="CHEBI:16526"/>
        <dbReference type="EC" id="4.1.1.112"/>
    </reaction>
</comment>
<comment type="cofactor">
    <cofactor evidence="1">
        <name>Mg(2+)</name>
        <dbReference type="ChEBI" id="CHEBI:18420"/>
    </cofactor>
    <text evidence="1">Binds 1 Mg(2+) ion per subunit.</text>
</comment>
<comment type="subunit">
    <text evidence="1">Homotetramer; dimer of dimers.</text>
</comment>
<comment type="similarity">
    <text evidence="2">Belongs to the isocitrate lyase/PEP mutase superfamily. Oxaloacetate decarboxylase family.</text>
</comment>
<keyword id="KW-0210">Decarboxylase</keyword>
<keyword id="KW-0456">Lyase</keyword>
<keyword id="KW-0460">Magnesium</keyword>
<keyword id="KW-0479">Metal-binding</keyword>
<keyword id="KW-1185">Reference proteome</keyword>
<gene>
    <name type="ordered locus">RPB_2368</name>
</gene>
<feature type="chain" id="PRO_0000364079" description="Oxaloacetate decarboxylase">
    <location>
        <begin position="1"/>
        <end position="289"/>
    </location>
</feature>
<feature type="binding site" evidence="1">
    <location>
        <position position="47"/>
    </location>
    <ligand>
        <name>substrate</name>
    </ligand>
</feature>
<feature type="binding site" evidence="1">
    <location>
        <position position="85"/>
    </location>
    <ligand>
        <name>Mg(2+)</name>
        <dbReference type="ChEBI" id="CHEBI:18420"/>
    </ligand>
</feature>
<feature type="binding site" evidence="1">
    <location>
        <position position="156"/>
    </location>
    <ligand>
        <name>substrate</name>
    </ligand>
</feature>
<feature type="binding site" evidence="1">
    <location>
        <position position="232"/>
    </location>
    <ligand>
        <name>substrate</name>
    </ligand>
</feature>
<evidence type="ECO:0000255" key="1">
    <source>
        <dbReference type="HAMAP-Rule" id="MF_01299"/>
    </source>
</evidence>
<evidence type="ECO:0000305" key="2"/>
<sequence>MAWRDRRGALRAILEGSACVRPASVYDAISIRIADDLRFPLGMFGGSVASLAILGDPDSALITLTELAEQMRRMARAAALPVLVDADHGYGNALNVRRTVQELEAAGCAGLTIEDTLLPQAYGEAKPQLISSEEGLGKINAALDARLDPSLVIIGRTGACSISSLDDAIERAVAYEAAGVDALFFTGVKARDQLQAISAATRLPIVLGSPPAELADWEYLAAQRVRIAVQGHAPIAAATEAVFRTLSALRDGAAPQQLTGLATPELMDRVTRASLVDERGARFLGLARE</sequence>